<dbReference type="EC" id="1.14.-.-"/>
<dbReference type="EMBL" id="AF022463">
    <property type="protein sequence ID" value="AAB94592.1"/>
    <property type="molecule type" value="mRNA"/>
</dbReference>
<dbReference type="PIR" id="T05946">
    <property type="entry name" value="T05946"/>
</dbReference>
<dbReference type="RefSeq" id="NP_001304524.1">
    <property type="nucleotide sequence ID" value="NM_001317595.1"/>
</dbReference>
<dbReference type="SMR" id="O48927"/>
<dbReference type="FunCoup" id="O48927">
    <property type="interactions" value="158"/>
</dbReference>
<dbReference type="STRING" id="3847.O48927"/>
<dbReference type="PaxDb" id="3847-GLYMA19G44790.1"/>
<dbReference type="GeneID" id="100799906"/>
<dbReference type="KEGG" id="gmx:100799906"/>
<dbReference type="eggNOG" id="KOG0156">
    <property type="taxonomic scope" value="Eukaryota"/>
</dbReference>
<dbReference type="InParanoid" id="O48927"/>
<dbReference type="OrthoDB" id="1055148at2759"/>
<dbReference type="Proteomes" id="UP000008827">
    <property type="component" value="Unplaced"/>
</dbReference>
<dbReference type="GO" id="GO:0020037">
    <property type="term" value="F:heme binding"/>
    <property type="evidence" value="ECO:0007669"/>
    <property type="project" value="InterPro"/>
</dbReference>
<dbReference type="GO" id="GO:0005506">
    <property type="term" value="F:iron ion binding"/>
    <property type="evidence" value="ECO:0007669"/>
    <property type="project" value="InterPro"/>
</dbReference>
<dbReference type="GO" id="GO:0004497">
    <property type="term" value="F:monooxygenase activity"/>
    <property type="evidence" value="ECO:0007669"/>
    <property type="project" value="UniProtKB-KW"/>
</dbReference>
<dbReference type="GO" id="GO:0016705">
    <property type="term" value="F:oxidoreductase activity, acting on paired donors, with incorporation or reduction of molecular oxygen"/>
    <property type="evidence" value="ECO:0007669"/>
    <property type="project" value="InterPro"/>
</dbReference>
<dbReference type="CDD" id="cd11076">
    <property type="entry name" value="CYP78"/>
    <property type="match status" value="1"/>
</dbReference>
<dbReference type="FunFam" id="1.10.630.10:FF:000016">
    <property type="entry name" value="Cytochrome P450 78A5"/>
    <property type="match status" value="1"/>
</dbReference>
<dbReference type="Gene3D" id="1.10.630.10">
    <property type="entry name" value="Cytochrome P450"/>
    <property type="match status" value="1"/>
</dbReference>
<dbReference type="InterPro" id="IPR001128">
    <property type="entry name" value="Cyt_P450"/>
</dbReference>
<dbReference type="InterPro" id="IPR017972">
    <property type="entry name" value="Cyt_P450_CS"/>
</dbReference>
<dbReference type="InterPro" id="IPR002401">
    <property type="entry name" value="Cyt_P450_E_grp-I"/>
</dbReference>
<dbReference type="InterPro" id="IPR036396">
    <property type="entry name" value="Cyt_P450_sf"/>
</dbReference>
<dbReference type="InterPro" id="IPR051996">
    <property type="entry name" value="Cytochrome_P450_78A"/>
</dbReference>
<dbReference type="PANTHER" id="PTHR47946:SF1">
    <property type="entry name" value="CYTOCHROME P450 78A3"/>
    <property type="match status" value="1"/>
</dbReference>
<dbReference type="PANTHER" id="PTHR47946">
    <property type="entry name" value="CYTOCHROME P450 78A7-RELATED"/>
    <property type="match status" value="1"/>
</dbReference>
<dbReference type="Pfam" id="PF00067">
    <property type="entry name" value="p450"/>
    <property type="match status" value="1"/>
</dbReference>
<dbReference type="PRINTS" id="PR00463">
    <property type="entry name" value="EP450I"/>
</dbReference>
<dbReference type="PRINTS" id="PR00385">
    <property type="entry name" value="P450"/>
</dbReference>
<dbReference type="SUPFAM" id="SSF48264">
    <property type="entry name" value="Cytochrome P450"/>
    <property type="match status" value="1"/>
</dbReference>
<dbReference type="PROSITE" id="PS00086">
    <property type="entry name" value="CYTOCHROME_P450"/>
    <property type="match status" value="1"/>
</dbReference>
<feature type="chain" id="PRO_0000052150" description="Cytochrome P450 78A3">
    <location>
        <begin position="1"/>
        <end position="523"/>
    </location>
</feature>
<feature type="binding site" description="axial binding residue" evidence="1">
    <location>
        <position position="467"/>
    </location>
    <ligand>
        <name>heme</name>
        <dbReference type="ChEBI" id="CHEBI:30413"/>
    </ligand>
    <ligandPart>
        <name>Fe</name>
        <dbReference type="ChEBI" id="CHEBI:18248"/>
    </ligandPart>
</feature>
<comment type="cofactor">
    <cofactor evidence="1">
        <name>heme</name>
        <dbReference type="ChEBI" id="CHEBI:30413"/>
    </cofactor>
</comment>
<comment type="similarity">
    <text evidence="2">Belongs to the cytochrome P450 family.</text>
</comment>
<sequence length="523" mass="58565">MTSHIDDNLWIIALTSKCTQENLAWVLLIMGSLWLTMTFYYWSHPGGPAWGKYYTYSPPLSIIPGPKGFPLIGSMGLMTSLAHHRIAAAAATCRAKRLMAFSLGDTRVIVTCHPDVAKEILNSSVFADRPVKESAYSLMFNRAIGFASYGVYWRSLRRIASNHLFCPRQIKASELQRSQIAAQMVHILNNKRHRSLRVRQVLKKASLSNMMCSVFGQEYKLHDPNSGMEDLGILVDQGYDLLGLFNWADHLPFLAHFDAQNIRFRCSNLVPMVNRFVGTIIAEHRASKTETNRDFVDVLLSLPEPDQLSDSDMIAVLWEMIFRGTDTVAVLIEWILARMALHPHVQSKVQEELDAVVGKARAVAEDDVAVMTYLPAVVKEVLRLHPPGPLLSWARLSINDTTIDGYHVPAGTTAMVNTWAICRDPHVWKDPLEFMPERFVTAGGDAEFSILGSDPRLAPFGSGRRACPGKTLGWATVNFWVASLLHEFEWVPSDEKGVDLTEVLKLSSEMANPLTVKVRPRRG</sequence>
<gene>
    <name type="primary">CYP78A3</name>
</gene>
<organism>
    <name type="scientific">Glycine max</name>
    <name type="common">Soybean</name>
    <name type="synonym">Glycine hispida</name>
    <dbReference type="NCBI Taxonomy" id="3847"/>
    <lineage>
        <taxon>Eukaryota</taxon>
        <taxon>Viridiplantae</taxon>
        <taxon>Streptophyta</taxon>
        <taxon>Embryophyta</taxon>
        <taxon>Tracheophyta</taxon>
        <taxon>Spermatophyta</taxon>
        <taxon>Magnoliopsida</taxon>
        <taxon>eudicotyledons</taxon>
        <taxon>Gunneridae</taxon>
        <taxon>Pentapetalae</taxon>
        <taxon>rosids</taxon>
        <taxon>fabids</taxon>
        <taxon>Fabales</taxon>
        <taxon>Fabaceae</taxon>
        <taxon>Papilionoideae</taxon>
        <taxon>50 kb inversion clade</taxon>
        <taxon>NPAAA clade</taxon>
        <taxon>indigoferoid/millettioid clade</taxon>
        <taxon>Phaseoleae</taxon>
        <taxon>Glycine</taxon>
        <taxon>Glycine subgen. Soja</taxon>
    </lineage>
</organism>
<keyword id="KW-0349">Heme</keyword>
<keyword id="KW-0408">Iron</keyword>
<keyword id="KW-0479">Metal-binding</keyword>
<keyword id="KW-0503">Monooxygenase</keyword>
<keyword id="KW-0560">Oxidoreductase</keyword>
<keyword id="KW-1185">Reference proteome</keyword>
<proteinExistence type="evidence at transcript level"/>
<evidence type="ECO:0000250" key="1"/>
<evidence type="ECO:0000305" key="2"/>
<name>C78A3_SOYBN</name>
<accession>O48927</accession>
<protein>
    <recommendedName>
        <fullName>Cytochrome P450 78A3</fullName>
        <ecNumber>1.14.-.-</ecNumber>
    </recommendedName>
</protein>
<reference key="1">
    <citation type="submission" date="1997-09" db="EMBL/GenBank/DDBJ databases">
        <authorList>
            <person name="Siminszky B."/>
            <person name="Dewey R.E."/>
            <person name="Corbin F.T."/>
        </authorList>
    </citation>
    <scope>NUCLEOTIDE SEQUENCE [MRNA]</scope>
</reference>